<organism>
    <name type="scientific">Emericella nidulans (strain FGSC A4 / ATCC 38163 / CBS 112.46 / NRRL 194 / M139)</name>
    <name type="common">Aspergillus nidulans</name>
    <dbReference type="NCBI Taxonomy" id="227321"/>
    <lineage>
        <taxon>Eukaryota</taxon>
        <taxon>Fungi</taxon>
        <taxon>Dikarya</taxon>
        <taxon>Ascomycota</taxon>
        <taxon>Pezizomycotina</taxon>
        <taxon>Eurotiomycetes</taxon>
        <taxon>Eurotiomycetidae</taxon>
        <taxon>Eurotiales</taxon>
        <taxon>Aspergillaceae</taxon>
        <taxon>Aspergillus</taxon>
        <taxon>Aspergillus subgen. Nidulantes</taxon>
    </lineage>
</organism>
<accession>Q5BD89</accession>
<accession>C8VMM0</accession>
<accession>Q56UN7</accession>
<gene>
    <name type="primary">csnA</name>
    <name type="synonym">csn1</name>
    <name type="ORF">AN1491</name>
</gene>
<comment type="function">
    <text evidence="1 3">Component of the COP9 signalosome (CSN) complex that acts as an regulator of the ubiquitin (Ubl) conjugation pathway by mediating the deneddylation of the cullin subunit of SCF-type E3 ubiquitin-protein ligase complexes (By similarity). The CSN complex seems to link protein degradation to sexual development. Required for fruit body formation.</text>
</comment>
<comment type="subunit">
    <text evidence="3">Component of the COP9 signalosome (CSN) complex.</text>
</comment>
<comment type="subcellular location">
    <subcellularLocation>
        <location evidence="1">Cytoplasm</location>
    </subcellularLocation>
    <subcellularLocation>
        <location evidence="1">Nucleus</location>
    </subcellularLocation>
</comment>
<comment type="similarity">
    <text evidence="4">Belongs to the CSN1 family.</text>
</comment>
<comment type="sequence caution" evidence="4">
    <conflict type="erroneous gene model prediction">
        <sequence resource="EMBL-CDS" id="EAA64621"/>
    </conflict>
</comment>
<evidence type="ECO:0000250" key="1"/>
<evidence type="ECO:0000255" key="2">
    <source>
        <dbReference type="PROSITE-ProRule" id="PRU01185"/>
    </source>
</evidence>
<evidence type="ECO:0000269" key="3">
    <source>
    </source>
</evidence>
<evidence type="ECO:0000305" key="4"/>
<feature type="chain" id="PRO_0000314738" description="COP9 signalosome complex subunit 1">
    <location>
        <begin position="1"/>
        <end position="498"/>
    </location>
</feature>
<feature type="domain" description="PCI" evidence="2">
    <location>
        <begin position="249"/>
        <end position="430"/>
    </location>
</feature>
<dbReference type="EMBL" id="AY574249">
    <property type="protein sequence ID" value="AAT73769.1"/>
    <property type="molecule type" value="Genomic_DNA"/>
</dbReference>
<dbReference type="EMBL" id="AACD01000022">
    <property type="protein sequence ID" value="EAA64621.1"/>
    <property type="status" value="ALT_SEQ"/>
    <property type="molecule type" value="Genomic_DNA"/>
</dbReference>
<dbReference type="EMBL" id="BN001307">
    <property type="protein sequence ID" value="CBF84973.1"/>
    <property type="molecule type" value="Genomic_DNA"/>
</dbReference>
<dbReference type="RefSeq" id="XP_659095.1">
    <property type="nucleotide sequence ID" value="XM_654003.1"/>
</dbReference>
<dbReference type="SMR" id="Q5BD89"/>
<dbReference type="DIP" id="DIP-60925N"/>
<dbReference type="IntAct" id="Q5BD89">
    <property type="interactions" value="3"/>
</dbReference>
<dbReference type="STRING" id="227321.Q5BD89"/>
<dbReference type="EnsemblFungi" id="CBF84973">
    <property type="protein sequence ID" value="CBF84973"/>
    <property type="gene ID" value="ANIA_01491"/>
</dbReference>
<dbReference type="VEuPathDB" id="FungiDB:AN1491"/>
<dbReference type="eggNOG" id="KOG0686">
    <property type="taxonomic scope" value="Eukaryota"/>
</dbReference>
<dbReference type="HOGENOM" id="CLU_022348_1_1_1"/>
<dbReference type="InParanoid" id="Q5BD89"/>
<dbReference type="OMA" id="IYLQNWA"/>
<dbReference type="OrthoDB" id="422427at2759"/>
<dbReference type="Proteomes" id="UP000000560">
    <property type="component" value="Chromosome VII"/>
</dbReference>
<dbReference type="GO" id="GO:0008180">
    <property type="term" value="C:COP9 signalosome"/>
    <property type="evidence" value="ECO:0000314"/>
    <property type="project" value="AspGD"/>
</dbReference>
<dbReference type="GO" id="GO:0005737">
    <property type="term" value="C:cytoplasm"/>
    <property type="evidence" value="ECO:0007669"/>
    <property type="project" value="UniProtKB-SubCell"/>
</dbReference>
<dbReference type="GO" id="GO:0070791">
    <property type="term" value="P:cleistothecium development"/>
    <property type="evidence" value="ECO:0000315"/>
    <property type="project" value="AspGD"/>
</dbReference>
<dbReference type="FunFam" id="1.25.40.570:FF:000022">
    <property type="entry name" value="COP9 signalosome complex subunit 1"/>
    <property type="match status" value="1"/>
</dbReference>
<dbReference type="Gene3D" id="1.25.40.570">
    <property type="match status" value="1"/>
</dbReference>
<dbReference type="InterPro" id="IPR000717">
    <property type="entry name" value="PCI_dom"/>
</dbReference>
<dbReference type="InterPro" id="IPR019585">
    <property type="entry name" value="Rpn7/CSN1"/>
</dbReference>
<dbReference type="InterPro" id="IPR045135">
    <property type="entry name" value="Rpn7_N"/>
</dbReference>
<dbReference type="InterPro" id="IPR036390">
    <property type="entry name" value="WH_DNA-bd_sf"/>
</dbReference>
<dbReference type="PANTHER" id="PTHR14145">
    <property type="entry name" value="26S PROTESOME SUBUNIT 6"/>
    <property type="match status" value="1"/>
</dbReference>
<dbReference type="PANTHER" id="PTHR14145:SF2">
    <property type="entry name" value="COP9 SIGNALOSOME COMPLEX SUBUNIT 1"/>
    <property type="match status" value="1"/>
</dbReference>
<dbReference type="Pfam" id="PF01399">
    <property type="entry name" value="PCI"/>
    <property type="match status" value="1"/>
</dbReference>
<dbReference type="Pfam" id="PF10602">
    <property type="entry name" value="RPN7"/>
    <property type="match status" value="1"/>
</dbReference>
<dbReference type="SMART" id="SM00088">
    <property type="entry name" value="PINT"/>
    <property type="match status" value="1"/>
</dbReference>
<dbReference type="SUPFAM" id="SSF46785">
    <property type="entry name" value="Winged helix' DNA-binding domain"/>
    <property type="match status" value="1"/>
</dbReference>
<dbReference type="PROSITE" id="PS50250">
    <property type="entry name" value="PCI"/>
    <property type="match status" value="1"/>
</dbReference>
<protein>
    <recommendedName>
        <fullName>COP9 signalosome complex subunit 1</fullName>
        <shortName>CSN complex subunit 1</shortName>
    </recommendedName>
</protein>
<reference key="1">
    <citation type="journal article" date="2007" name="Proc. Natl. Acad. Sci. U.S.A.">
        <title>An eight-subunit COP9 signalosome with an intact JAMM motif is required for fungal fruit body formation.</title>
        <authorList>
            <person name="Busch S."/>
            <person name="Schwier E.U."/>
            <person name="Nahlik K."/>
            <person name="Bayram O."/>
            <person name="Helmstaedt K."/>
            <person name="Draht O.W."/>
            <person name="Krappmann S."/>
            <person name="Valerius O."/>
            <person name="Lipscomb W.N."/>
            <person name="Braus G.H."/>
        </authorList>
    </citation>
    <scope>NUCLEOTIDE SEQUENCE [GENOMIC DNA]</scope>
    <scope>FUNCTION</scope>
    <scope>IDENTIFICATION IN THE CSN COMPLEX</scope>
    <scope>IDENTIFICATION BY MASS SPECTROMETRY</scope>
    <source>
        <strain>FGSC A4 / ATCC 38163 / CBS 112.46 / NRRL 194 / M139</strain>
    </source>
</reference>
<reference key="2">
    <citation type="journal article" date="2005" name="Nature">
        <title>Sequencing of Aspergillus nidulans and comparative analysis with A. fumigatus and A. oryzae.</title>
        <authorList>
            <person name="Galagan J.E."/>
            <person name="Calvo S.E."/>
            <person name="Cuomo C."/>
            <person name="Ma L.-J."/>
            <person name="Wortman J.R."/>
            <person name="Batzoglou S."/>
            <person name="Lee S.-I."/>
            <person name="Bastuerkmen M."/>
            <person name="Spevak C.C."/>
            <person name="Clutterbuck J."/>
            <person name="Kapitonov V."/>
            <person name="Jurka J."/>
            <person name="Scazzocchio C."/>
            <person name="Farman M.L."/>
            <person name="Butler J."/>
            <person name="Purcell S."/>
            <person name="Harris S."/>
            <person name="Braus G.H."/>
            <person name="Draht O."/>
            <person name="Busch S."/>
            <person name="D'Enfert C."/>
            <person name="Bouchier C."/>
            <person name="Goldman G.H."/>
            <person name="Bell-Pedersen D."/>
            <person name="Griffiths-Jones S."/>
            <person name="Doonan J.H."/>
            <person name="Yu J."/>
            <person name="Vienken K."/>
            <person name="Pain A."/>
            <person name="Freitag M."/>
            <person name="Selker E.U."/>
            <person name="Archer D.B."/>
            <person name="Penalva M.A."/>
            <person name="Oakley B.R."/>
            <person name="Momany M."/>
            <person name="Tanaka T."/>
            <person name="Kumagai T."/>
            <person name="Asai K."/>
            <person name="Machida M."/>
            <person name="Nierman W.C."/>
            <person name="Denning D.W."/>
            <person name="Caddick M.X."/>
            <person name="Hynes M."/>
            <person name="Paoletti M."/>
            <person name="Fischer R."/>
            <person name="Miller B.L."/>
            <person name="Dyer P.S."/>
            <person name="Sachs M.S."/>
            <person name="Osmani S.A."/>
            <person name="Birren B.W."/>
        </authorList>
    </citation>
    <scope>NUCLEOTIDE SEQUENCE [LARGE SCALE GENOMIC DNA]</scope>
    <source>
        <strain>FGSC A4 / ATCC 38163 / CBS 112.46 / NRRL 194 / M139</strain>
    </source>
</reference>
<reference key="3">
    <citation type="journal article" date="2009" name="Fungal Genet. Biol.">
        <title>The 2008 update of the Aspergillus nidulans genome annotation: a community effort.</title>
        <authorList>
            <person name="Wortman J.R."/>
            <person name="Gilsenan J.M."/>
            <person name="Joardar V."/>
            <person name="Deegan J."/>
            <person name="Clutterbuck J."/>
            <person name="Andersen M.R."/>
            <person name="Archer D."/>
            <person name="Bencina M."/>
            <person name="Braus G."/>
            <person name="Coutinho P."/>
            <person name="von Dohren H."/>
            <person name="Doonan J."/>
            <person name="Driessen A.J."/>
            <person name="Durek P."/>
            <person name="Espeso E."/>
            <person name="Fekete E."/>
            <person name="Flipphi M."/>
            <person name="Estrada C.G."/>
            <person name="Geysens S."/>
            <person name="Goldman G."/>
            <person name="de Groot P.W."/>
            <person name="Hansen K."/>
            <person name="Harris S.D."/>
            <person name="Heinekamp T."/>
            <person name="Helmstaedt K."/>
            <person name="Henrissat B."/>
            <person name="Hofmann G."/>
            <person name="Homan T."/>
            <person name="Horio T."/>
            <person name="Horiuchi H."/>
            <person name="James S."/>
            <person name="Jones M."/>
            <person name="Karaffa L."/>
            <person name="Karanyi Z."/>
            <person name="Kato M."/>
            <person name="Keller N."/>
            <person name="Kelly D.E."/>
            <person name="Kiel J.A."/>
            <person name="Kim J.M."/>
            <person name="van der Klei I.J."/>
            <person name="Klis F.M."/>
            <person name="Kovalchuk A."/>
            <person name="Krasevec N."/>
            <person name="Kubicek C.P."/>
            <person name="Liu B."/>
            <person name="Maccabe A."/>
            <person name="Meyer V."/>
            <person name="Mirabito P."/>
            <person name="Miskei M."/>
            <person name="Mos M."/>
            <person name="Mullins J."/>
            <person name="Nelson D.R."/>
            <person name="Nielsen J."/>
            <person name="Oakley B.R."/>
            <person name="Osmani S.A."/>
            <person name="Pakula T."/>
            <person name="Paszewski A."/>
            <person name="Paulsen I."/>
            <person name="Pilsyk S."/>
            <person name="Pocsi I."/>
            <person name="Punt P.J."/>
            <person name="Ram A.F."/>
            <person name="Ren Q."/>
            <person name="Robellet X."/>
            <person name="Robson G."/>
            <person name="Seiboth B."/>
            <person name="van Solingen P."/>
            <person name="Specht T."/>
            <person name="Sun J."/>
            <person name="Taheri-Talesh N."/>
            <person name="Takeshita N."/>
            <person name="Ussery D."/>
            <person name="vanKuyk P.A."/>
            <person name="Visser H."/>
            <person name="van de Vondervoort P.J."/>
            <person name="de Vries R.P."/>
            <person name="Walton J."/>
            <person name="Xiang X."/>
            <person name="Xiong Y."/>
            <person name="Zeng A.P."/>
            <person name="Brandt B.W."/>
            <person name="Cornell M.J."/>
            <person name="van den Hondel C.A."/>
            <person name="Visser J."/>
            <person name="Oliver S.G."/>
            <person name="Turner G."/>
        </authorList>
    </citation>
    <scope>GENOME REANNOTATION</scope>
    <source>
        <strain>FGSC A4 / ATCC 38163 / CBS 112.46 / NRRL 194 / M139</strain>
    </source>
</reference>
<proteinExistence type="evidence at protein level"/>
<sequence length="498" mass="55664">MEPMLPEAGEAALLSSYAPQASGSMGVDPDPITGLVSTSAAPLVRVEEAPKFELESYIANYTGRTRFNRLYLIGTCSSYLAVDALKAAIAEAKSGKDVARYLRAVQALADVAPNEPEATIDSDWVERSQKVVKAETDRLEHELRGYKNNLIKESIRMGNEELGQHYHRIGDLTSAFKAYSRMRDFCTTPSHIASMLFKIINVAIERGDWLNVQSNVHRLRSQGGKPEEQAKHQPKISAAMGLSQLHSGSYLEAANSFIATDPSLGDTFNEVLTSNDVAVYGGLCALASMDRNELQRRVLDNSSFRNFLELEPHIRRAISFFCNSKFRPCLEILEAYRADYLLDIHLQRHVQVLYNRIRTKSIQQYLIPFNRVSLESMAKIFVLGNPTSQSSQSDSKSAFVQELISLIQDGTLDARIDLEKHVLVSTQGDKRIEVQEAVLDSLDNYVREAHLRLLRSNIIRAGLEVRPLGEDRRTKLEERGKKGHSAIGNLLRATGMKQ</sequence>
<keyword id="KW-0963">Cytoplasm</keyword>
<keyword id="KW-0539">Nucleus</keyword>
<keyword id="KW-1185">Reference proteome</keyword>
<keyword id="KW-0736">Signalosome</keyword>
<name>CSN1_EMENI</name>